<keyword id="KW-0963">Cytoplasm</keyword>
<keyword id="KW-0520">NAD</keyword>
<keyword id="KW-0560">Oxidoreductase</keyword>
<evidence type="ECO:0000255" key="1">
    <source>
        <dbReference type="HAMAP-Rule" id="MF_00820"/>
    </source>
</evidence>
<gene>
    <name evidence="1" type="primary">dlgD</name>
    <name type="ordered locus">STY4130</name>
    <name type="ordered locus">t3851</name>
</gene>
<comment type="function">
    <text evidence="1">Catalyzes the reduction of 2,3-diketo-L-gulonate in the presence of NADH, to form 3-keto-L-gulonate.</text>
</comment>
<comment type="catalytic activity">
    <reaction evidence="1">
        <text>3-dehydro-L-gulonate + NAD(+) = 2,3-dioxo-L-gulonate + NADH + H(+)</text>
        <dbReference type="Rhea" id="RHEA:21924"/>
        <dbReference type="ChEBI" id="CHEBI:15378"/>
        <dbReference type="ChEBI" id="CHEBI:57441"/>
        <dbReference type="ChEBI" id="CHEBI:57540"/>
        <dbReference type="ChEBI" id="CHEBI:57655"/>
        <dbReference type="ChEBI" id="CHEBI:57945"/>
        <dbReference type="EC" id="1.1.1.130"/>
    </reaction>
</comment>
<comment type="catalytic activity">
    <reaction evidence="1">
        <text>3-dehydro-L-gulonate + NADP(+) = 2,3-dioxo-L-gulonate + NADPH + H(+)</text>
        <dbReference type="Rhea" id="RHEA:21928"/>
        <dbReference type="ChEBI" id="CHEBI:15378"/>
        <dbReference type="ChEBI" id="CHEBI:57441"/>
        <dbReference type="ChEBI" id="CHEBI:57655"/>
        <dbReference type="ChEBI" id="CHEBI:57783"/>
        <dbReference type="ChEBI" id="CHEBI:58349"/>
        <dbReference type="EC" id="1.1.1.130"/>
    </reaction>
</comment>
<comment type="subunit">
    <text evidence="1">Homodimer.</text>
</comment>
<comment type="subcellular location">
    <subcellularLocation>
        <location evidence="1">Cytoplasm</location>
    </subcellularLocation>
</comment>
<comment type="similarity">
    <text evidence="1">Belongs to the LDH2/MDH2 oxidoreductase family. DlgD subfamily.</text>
</comment>
<reference key="1">
    <citation type="journal article" date="2001" name="Nature">
        <title>Complete genome sequence of a multiple drug resistant Salmonella enterica serovar Typhi CT18.</title>
        <authorList>
            <person name="Parkhill J."/>
            <person name="Dougan G."/>
            <person name="James K.D."/>
            <person name="Thomson N.R."/>
            <person name="Pickard D."/>
            <person name="Wain J."/>
            <person name="Churcher C.M."/>
            <person name="Mungall K.L."/>
            <person name="Bentley S.D."/>
            <person name="Holden M.T.G."/>
            <person name="Sebaihia M."/>
            <person name="Baker S."/>
            <person name="Basham D."/>
            <person name="Brooks K."/>
            <person name="Chillingworth T."/>
            <person name="Connerton P."/>
            <person name="Cronin A."/>
            <person name="Davis P."/>
            <person name="Davies R.M."/>
            <person name="Dowd L."/>
            <person name="White N."/>
            <person name="Farrar J."/>
            <person name="Feltwell T."/>
            <person name="Hamlin N."/>
            <person name="Haque A."/>
            <person name="Hien T.T."/>
            <person name="Holroyd S."/>
            <person name="Jagels K."/>
            <person name="Krogh A."/>
            <person name="Larsen T.S."/>
            <person name="Leather S."/>
            <person name="Moule S."/>
            <person name="O'Gaora P."/>
            <person name="Parry C."/>
            <person name="Quail M.A."/>
            <person name="Rutherford K.M."/>
            <person name="Simmonds M."/>
            <person name="Skelton J."/>
            <person name="Stevens K."/>
            <person name="Whitehead S."/>
            <person name="Barrell B.G."/>
        </authorList>
    </citation>
    <scope>NUCLEOTIDE SEQUENCE [LARGE SCALE GENOMIC DNA]</scope>
    <source>
        <strain>CT18</strain>
    </source>
</reference>
<reference key="2">
    <citation type="journal article" date="2003" name="J. Bacteriol.">
        <title>Comparative genomics of Salmonella enterica serovar Typhi strains Ty2 and CT18.</title>
        <authorList>
            <person name="Deng W."/>
            <person name="Liou S.-R."/>
            <person name="Plunkett G. III"/>
            <person name="Mayhew G.F."/>
            <person name="Rose D.J."/>
            <person name="Burland V."/>
            <person name="Kodoyianni V."/>
            <person name="Schwartz D.C."/>
            <person name="Blattner F.R."/>
        </authorList>
    </citation>
    <scope>NUCLEOTIDE SEQUENCE [LARGE SCALE GENOMIC DNA]</scope>
    <source>
        <strain>ATCC 700931 / Ty2</strain>
    </source>
</reference>
<accession>Q8Z2C5</accession>
<accession>Q7C644</accession>
<proteinExistence type="inferred from homology"/>
<dbReference type="EC" id="1.1.1.130" evidence="1"/>
<dbReference type="EMBL" id="AL513382">
    <property type="protein sequence ID" value="CAD07960.1"/>
    <property type="molecule type" value="Genomic_DNA"/>
</dbReference>
<dbReference type="EMBL" id="AE014613">
    <property type="protein sequence ID" value="AAO71331.1"/>
    <property type="molecule type" value="Genomic_DNA"/>
</dbReference>
<dbReference type="RefSeq" id="NP_458259.1">
    <property type="nucleotide sequence ID" value="NC_003198.1"/>
</dbReference>
<dbReference type="SMR" id="Q8Z2C5"/>
<dbReference type="STRING" id="220341.gene:17587972"/>
<dbReference type="KEGG" id="stt:t3851"/>
<dbReference type="KEGG" id="sty:STY4130"/>
<dbReference type="PATRIC" id="fig|220341.7.peg.4217"/>
<dbReference type="eggNOG" id="COG2055">
    <property type="taxonomic scope" value="Bacteria"/>
</dbReference>
<dbReference type="HOGENOM" id="CLU_040452_4_0_6"/>
<dbReference type="OMA" id="GEVGDQY"/>
<dbReference type="OrthoDB" id="9811519at2"/>
<dbReference type="Proteomes" id="UP000000541">
    <property type="component" value="Chromosome"/>
</dbReference>
<dbReference type="Proteomes" id="UP000002670">
    <property type="component" value="Chromosome"/>
</dbReference>
<dbReference type="GO" id="GO:0005737">
    <property type="term" value="C:cytoplasm"/>
    <property type="evidence" value="ECO:0007669"/>
    <property type="project" value="UniProtKB-SubCell"/>
</dbReference>
<dbReference type="GO" id="GO:0047559">
    <property type="term" value="F:3-dehydro-L-gulonate 2-dehydrogenase activity"/>
    <property type="evidence" value="ECO:0007669"/>
    <property type="project" value="UniProtKB-UniRule"/>
</dbReference>
<dbReference type="GO" id="GO:0070403">
    <property type="term" value="F:NAD+ binding"/>
    <property type="evidence" value="ECO:0007669"/>
    <property type="project" value="InterPro"/>
</dbReference>
<dbReference type="Gene3D" id="1.10.1530.10">
    <property type="match status" value="1"/>
</dbReference>
<dbReference type="Gene3D" id="3.30.1370.60">
    <property type="entry name" value="Hypothetical oxidoreductase yiak, domain 2"/>
    <property type="match status" value="1"/>
</dbReference>
<dbReference type="Gene3D" id="3.30.60.50">
    <property type="entry name" value="Hypothetical oxidoreductase yiak, domain 3"/>
    <property type="match status" value="1"/>
</dbReference>
<dbReference type="HAMAP" id="MF_00820">
    <property type="entry name" value="Diketo_gul_reduc"/>
    <property type="match status" value="1"/>
</dbReference>
<dbReference type="InterPro" id="IPR023689">
    <property type="entry name" value="Diketo_gul_Rdtase"/>
</dbReference>
<dbReference type="InterPro" id="IPR043144">
    <property type="entry name" value="Mal/L-sulf/L-lact_DH-like_ah"/>
</dbReference>
<dbReference type="InterPro" id="IPR043143">
    <property type="entry name" value="Mal/L-sulf/L-lact_DH-like_NADP"/>
</dbReference>
<dbReference type="InterPro" id="IPR036111">
    <property type="entry name" value="Mal/L-sulfo/L-lacto_DH-like_sf"/>
</dbReference>
<dbReference type="InterPro" id="IPR003767">
    <property type="entry name" value="Malate/L-lactate_DH-like"/>
</dbReference>
<dbReference type="NCBIfam" id="NF009750">
    <property type="entry name" value="PRK13260.1"/>
    <property type="match status" value="1"/>
</dbReference>
<dbReference type="PANTHER" id="PTHR11091:SF3">
    <property type="entry name" value="2,3-DIKETO-L-GULONATE REDUCTASE"/>
    <property type="match status" value="1"/>
</dbReference>
<dbReference type="PANTHER" id="PTHR11091">
    <property type="entry name" value="OXIDOREDUCTASE-RELATED"/>
    <property type="match status" value="1"/>
</dbReference>
<dbReference type="Pfam" id="PF02615">
    <property type="entry name" value="Ldh_2"/>
    <property type="match status" value="1"/>
</dbReference>
<dbReference type="SUPFAM" id="SSF89733">
    <property type="entry name" value="L-sulfolactate dehydrogenase-like"/>
    <property type="match status" value="1"/>
</dbReference>
<organism>
    <name type="scientific">Salmonella typhi</name>
    <dbReference type="NCBI Taxonomy" id="90370"/>
    <lineage>
        <taxon>Bacteria</taxon>
        <taxon>Pseudomonadati</taxon>
        <taxon>Pseudomonadota</taxon>
        <taxon>Gammaproteobacteria</taxon>
        <taxon>Enterobacterales</taxon>
        <taxon>Enterobacteriaceae</taxon>
        <taxon>Salmonella</taxon>
    </lineage>
</organism>
<sequence>MKVTFEELKGAFYRVLRSRNIAEDTADACAEMFARTTESGVYSHGVNRFPRFIQQLDNGDIIPDAKPQRVTSLGAIEQWDAQRAIGNLTAKKMMDRAIELASDHGIGLVALRNANHWMRGGSYGWQAAEKGYIGICWTNSIAVMPPWGAKECRIGTNPLIVAIPSTPITMVDMSMSMFSYGMLEVNRLAGRELPVDGGFDDNGQLTKEPGVIEKNHRILPMGYWKGSGLSIVLDMIATLLSNGSSVAEVTQENSDEYGVSQIFIAIEVDKLIDGATRDAKLQRIMDFITTAERADDNVAIRLPGHEFTKLLDDSRCNGITIDDSVWAKIQAL</sequence>
<feature type="chain" id="PRO_0000083837" description="2,3-diketo-L-gulonate reductase">
    <location>
        <begin position="1"/>
        <end position="332"/>
    </location>
</feature>
<feature type="active site" description="Proton donor" evidence="1">
    <location>
        <position position="44"/>
    </location>
</feature>
<feature type="binding site" evidence="1">
    <location>
        <begin position="168"/>
        <end position="174"/>
    </location>
    <ligand>
        <name>NAD(+)</name>
        <dbReference type="ChEBI" id="CHEBI:57540"/>
    </ligand>
</feature>
<feature type="binding site" evidence="1">
    <location>
        <begin position="224"/>
        <end position="225"/>
    </location>
    <ligand>
        <name>NAD(+)</name>
        <dbReference type="ChEBI" id="CHEBI:57540"/>
    </ligand>
</feature>
<feature type="binding site" evidence="1">
    <location>
        <begin position="304"/>
        <end position="306"/>
    </location>
    <ligand>
        <name>NAD(+)</name>
        <dbReference type="ChEBI" id="CHEBI:57540"/>
    </ligand>
</feature>
<protein>
    <recommendedName>
        <fullName evidence="1">2,3-diketo-L-gulonate reductase</fullName>
        <shortName evidence="1">2,3-DKG reductase</shortName>
        <ecNumber evidence="1">1.1.1.130</ecNumber>
    </recommendedName>
    <alternativeName>
        <fullName evidence="1">3-dehydro-L-gulonate 2-dehydrogenase</fullName>
    </alternativeName>
</protein>
<name>DLGD_SALTI</name>